<feature type="chain" id="PRO_1000144600" description="Large ribosomal subunit protein uL23">
    <location>
        <begin position="1"/>
        <end position="99"/>
    </location>
</feature>
<protein>
    <recommendedName>
        <fullName evidence="1">Large ribosomal subunit protein uL23</fullName>
    </recommendedName>
    <alternativeName>
        <fullName evidence="2">50S ribosomal protein L23</fullName>
    </alternativeName>
</protein>
<reference key="1">
    <citation type="journal article" date="2009" name="Genome Res.">
        <title>Newly introduced genomic prophage islands are critical determinants of in vivo competitiveness in the Liverpool epidemic strain of Pseudomonas aeruginosa.</title>
        <authorList>
            <person name="Winstanley C."/>
            <person name="Langille M.G.I."/>
            <person name="Fothergill J.L."/>
            <person name="Kukavica-Ibrulj I."/>
            <person name="Paradis-Bleau C."/>
            <person name="Sanschagrin F."/>
            <person name="Thomson N.R."/>
            <person name="Winsor G.L."/>
            <person name="Quail M.A."/>
            <person name="Lennard N."/>
            <person name="Bignell A."/>
            <person name="Clarke L."/>
            <person name="Seeger K."/>
            <person name="Saunders D."/>
            <person name="Harris D."/>
            <person name="Parkhill J."/>
            <person name="Hancock R.E.W."/>
            <person name="Brinkman F.S.L."/>
            <person name="Levesque R.C."/>
        </authorList>
    </citation>
    <scope>NUCLEOTIDE SEQUENCE [LARGE SCALE GENOMIC DNA]</scope>
    <source>
        <strain>LESB58</strain>
    </source>
</reference>
<accession>B7V646</accession>
<comment type="function">
    <text evidence="1">One of the early assembly proteins it binds 23S rRNA. One of the proteins that surrounds the polypeptide exit tunnel on the outside of the ribosome. Forms the main docking site for trigger factor binding to the ribosome.</text>
</comment>
<comment type="subunit">
    <text evidence="1">Part of the 50S ribosomal subunit. Contacts protein L29, and trigger factor when it is bound to the ribosome.</text>
</comment>
<comment type="similarity">
    <text evidence="1">Belongs to the universal ribosomal protein uL23 family.</text>
</comment>
<gene>
    <name evidence="1" type="primary">rplW</name>
    <name type="ordered locus">PLES_06671</name>
</gene>
<keyword id="KW-0687">Ribonucleoprotein</keyword>
<keyword id="KW-0689">Ribosomal protein</keyword>
<keyword id="KW-0694">RNA-binding</keyword>
<keyword id="KW-0699">rRNA-binding</keyword>
<dbReference type="EMBL" id="FM209186">
    <property type="protein sequence ID" value="CAW25394.1"/>
    <property type="molecule type" value="Genomic_DNA"/>
</dbReference>
<dbReference type="RefSeq" id="WP_003093736.1">
    <property type="nucleotide sequence ID" value="NC_011770.1"/>
</dbReference>
<dbReference type="SMR" id="B7V646"/>
<dbReference type="GeneID" id="77219200"/>
<dbReference type="KEGG" id="pag:PLES_06671"/>
<dbReference type="HOGENOM" id="CLU_037562_3_1_6"/>
<dbReference type="GO" id="GO:1990904">
    <property type="term" value="C:ribonucleoprotein complex"/>
    <property type="evidence" value="ECO:0007669"/>
    <property type="project" value="UniProtKB-KW"/>
</dbReference>
<dbReference type="GO" id="GO:0005840">
    <property type="term" value="C:ribosome"/>
    <property type="evidence" value="ECO:0007669"/>
    <property type="project" value="UniProtKB-KW"/>
</dbReference>
<dbReference type="GO" id="GO:0019843">
    <property type="term" value="F:rRNA binding"/>
    <property type="evidence" value="ECO:0007669"/>
    <property type="project" value="UniProtKB-UniRule"/>
</dbReference>
<dbReference type="GO" id="GO:0003735">
    <property type="term" value="F:structural constituent of ribosome"/>
    <property type="evidence" value="ECO:0007669"/>
    <property type="project" value="InterPro"/>
</dbReference>
<dbReference type="GO" id="GO:0006412">
    <property type="term" value="P:translation"/>
    <property type="evidence" value="ECO:0007669"/>
    <property type="project" value="UniProtKB-UniRule"/>
</dbReference>
<dbReference type="FunFam" id="3.30.70.330:FF:000001">
    <property type="entry name" value="50S ribosomal protein L23"/>
    <property type="match status" value="1"/>
</dbReference>
<dbReference type="Gene3D" id="3.30.70.330">
    <property type="match status" value="1"/>
</dbReference>
<dbReference type="HAMAP" id="MF_01369_B">
    <property type="entry name" value="Ribosomal_uL23_B"/>
    <property type="match status" value="1"/>
</dbReference>
<dbReference type="InterPro" id="IPR012677">
    <property type="entry name" value="Nucleotide-bd_a/b_plait_sf"/>
</dbReference>
<dbReference type="InterPro" id="IPR013025">
    <property type="entry name" value="Ribosomal_uL23-like"/>
</dbReference>
<dbReference type="InterPro" id="IPR012678">
    <property type="entry name" value="Ribosomal_uL23/eL15/eS24_sf"/>
</dbReference>
<dbReference type="NCBIfam" id="NF004359">
    <property type="entry name" value="PRK05738.1-3"/>
    <property type="match status" value="1"/>
</dbReference>
<dbReference type="NCBIfam" id="NF004363">
    <property type="entry name" value="PRK05738.2-4"/>
    <property type="match status" value="1"/>
</dbReference>
<dbReference type="PANTHER" id="PTHR11620">
    <property type="entry name" value="60S RIBOSOMAL PROTEIN L23A"/>
    <property type="match status" value="1"/>
</dbReference>
<dbReference type="Pfam" id="PF00276">
    <property type="entry name" value="Ribosomal_L23"/>
    <property type="match status" value="1"/>
</dbReference>
<dbReference type="SUPFAM" id="SSF54189">
    <property type="entry name" value="Ribosomal proteins S24e, L23 and L15e"/>
    <property type="match status" value="1"/>
</dbReference>
<name>RL23_PSEA8</name>
<proteinExistence type="inferred from homology"/>
<organism>
    <name type="scientific">Pseudomonas aeruginosa (strain LESB58)</name>
    <dbReference type="NCBI Taxonomy" id="557722"/>
    <lineage>
        <taxon>Bacteria</taxon>
        <taxon>Pseudomonadati</taxon>
        <taxon>Pseudomonadota</taxon>
        <taxon>Gammaproteobacteria</taxon>
        <taxon>Pseudomonadales</taxon>
        <taxon>Pseudomonadaceae</taxon>
        <taxon>Pseudomonas</taxon>
    </lineage>
</organism>
<evidence type="ECO:0000255" key="1">
    <source>
        <dbReference type="HAMAP-Rule" id="MF_01369"/>
    </source>
</evidence>
<evidence type="ECO:0000305" key="2"/>
<sequence>MNQERVFKVLLGPHISEKATGLADGKSQFVFKVATDATKLEIKKAVESLFSVKVQRVTTLNVKGKTKRTARGLGKRNDWKKAYIALQPGQDLDFATSAE</sequence>